<proteinExistence type="inferred from homology"/>
<sequence>MTNIFKDSRRDLRERAFQTLFALEFGGEALDQAYFAYTYDKPIDEETEVDLPSFLLSLVTGVREELPQLDSQIEEKLKEGWSLSRLIMTDRTLLRLGLYEITSFEETPGRVAINEIIEIAKKYSDKTSAKFINGVLSQFVTDEA</sequence>
<name>NUSB_STRT2</name>
<gene>
    <name evidence="1" type="primary">nusB</name>
    <name type="ordered locus">stu1738</name>
</gene>
<protein>
    <recommendedName>
        <fullName evidence="1">Transcription antitermination protein NusB</fullName>
    </recommendedName>
    <alternativeName>
        <fullName evidence="1">Antitermination factor NusB</fullName>
    </alternativeName>
</protein>
<evidence type="ECO:0000255" key="1">
    <source>
        <dbReference type="HAMAP-Rule" id="MF_00073"/>
    </source>
</evidence>
<organism>
    <name type="scientific">Streptococcus thermophilus (strain ATCC BAA-250 / LMG 18311)</name>
    <dbReference type="NCBI Taxonomy" id="264199"/>
    <lineage>
        <taxon>Bacteria</taxon>
        <taxon>Bacillati</taxon>
        <taxon>Bacillota</taxon>
        <taxon>Bacilli</taxon>
        <taxon>Lactobacillales</taxon>
        <taxon>Streptococcaceae</taxon>
        <taxon>Streptococcus</taxon>
    </lineage>
</organism>
<keyword id="KW-1185">Reference proteome</keyword>
<keyword id="KW-0694">RNA-binding</keyword>
<keyword id="KW-0804">Transcription</keyword>
<keyword id="KW-0889">Transcription antitermination</keyword>
<keyword id="KW-0805">Transcription regulation</keyword>
<comment type="function">
    <text evidence="1">Involved in transcription antitermination. Required for transcription of ribosomal RNA (rRNA) genes. Binds specifically to the boxA antiterminator sequence of the ribosomal RNA (rrn) operons.</text>
</comment>
<comment type="similarity">
    <text evidence="1">Belongs to the NusB family.</text>
</comment>
<feature type="chain" id="PRO_0000265608" description="Transcription antitermination protein NusB">
    <location>
        <begin position="1"/>
        <end position="144"/>
    </location>
</feature>
<reference key="1">
    <citation type="journal article" date="2004" name="Nat. Biotechnol.">
        <title>Complete sequence and comparative genome analysis of the dairy bacterium Streptococcus thermophilus.</title>
        <authorList>
            <person name="Bolotin A."/>
            <person name="Quinquis B."/>
            <person name="Renault P."/>
            <person name="Sorokin A."/>
            <person name="Ehrlich S.D."/>
            <person name="Kulakauskas S."/>
            <person name="Lapidus A."/>
            <person name="Goltsman E."/>
            <person name="Mazur M."/>
            <person name="Pusch G.D."/>
            <person name="Fonstein M."/>
            <person name="Overbeek R."/>
            <person name="Kyprides N."/>
            <person name="Purnelle B."/>
            <person name="Prozzi D."/>
            <person name="Ngui K."/>
            <person name="Masuy D."/>
            <person name="Hancy F."/>
            <person name="Burteau S."/>
            <person name="Boutry M."/>
            <person name="Delcour J."/>
            <person name="Goffeau A."/>
            <person name="Hols P."/>
        </authorList>
    </citation>
    <scope>NUCLEOTIDE SEQUENCE [LARGE SCALE GENOMIC DNA]</scope>
    <source>
        <strain>ATCC BAA-250 / LMG 18311</strain>
    </source>
</reference>
<dbReference type="EMBL" id="CP000023">
    <property type="protein sequence ID" value="AAV61337.1"/>
    <property type="molecule type" value="Genomic_DNA"/>
</dbReference>
<dbReference type="RefSeq" id="WP_002951890.1">
    <property type="nucleotide sequence ID" value="NC_006448.1"/>
</dbReference>
<dbReference type="SMR" id="Q5M2R7"/>
<dbReference type="STRING" id="264199.stu1738"/>
<dbReference type="GeneID" id="66899474"/>
<dbReference type="KEGG" id="stl:stu1738"/>
<dbReference type="eggNOG" id="COG0781">
    <property type="taxonomic scope" value="Bacteria"/>
</dbReference>
<dbReference type="HOGENOM" id="CLU_087843_3_2_9"/>
<dbReference type="Proteomes" id="UP000001170">
    <property type="component" value="Chromosome"/>
</dbReference>
<dbReference type="GO" id="GO:0005829">
    <property type="term" value="C:cytosol"/>
    <property type="evidence" value="ECO:0007669"/>
    <property type="project" value="TreeGrafter"/>
</dbReference>
<dbReference type="GO" id="GO:0003723">
    <property type="term" value="F:RNA binding"/>
    <property type="evidence" value="ECO:0007669"/>
    <property type="project" value="UniProtKB-UniRule"/>
</dbReference>
<dbReference type="GO" id="GO:0006353">
    <property type="term" value="P:DNA-templated transcription termination"/>
    <property type="evidence" value="ECO:0007669"/>
    <property type="project" value="UniProtKB-UniRule"/>
</dbReference>
<dbReference type="GO" id="GO:0031564">
    <property type="term" value="P:transcription antitermination"/>
    <property type="evidence" value="ECO:0007669"/>
    <property type="project" value="UniProtKB-KW"/>
</dbReference>
<dbReference type="Gene3D" id="1.10.940.10">
    <property type="entry name" value="NusB-like"/>
    <property type="match status" value="1"/>
</dbReference>
<dbReference type="HAMAP" id="MF_00073">
    <property type="entry name" value="NusB"/>
    <property type="match status" value="1"/>
</dbReference>
<dbReference type="InterPro" id="IPR035926">
    <property type="entry name" value="NusB-like_sf"/>
</dbReference>
<dbReference type="InterPro" id="IPR011605">
    <property type="entry name" value="NusB_fam"/>
</dbReference>
<dbReference type="InterPro" id="IPR006027">
    <property type="entry name" value="NusB_RsmB_TIM44"/>
</dbReference>
<dbReference type="NCBIfam" id="TIGR01951">
    <property type="entry name" value="nusB"/>
    <property type="match status" value="1"/>
</dbReference>
<dbReference type="NCBIfam" id="NF001223">
    <property type="entry name" value="PRK00202.1-1"/>
    <property type="match status" value="1"/>
</dbReference>
<dbReference type="PANTHER" id="PTHR11078:SF3">
    <property type="entry name" value="ANTITERMINATION NUSB DOMAIN-CONTAINING PROTEIN"/>
    <property type="match status" value="1"/>
</dbReference>
<dbReference type="PANTHER" id="PTHR11078">
    <property type="entry name" value="N UTILIZATION SUBSTANCE PROTEIN B-RELATED"/>
    <property type="match status" value="1"/>
</dbReference>
<dbReference type="Pfam" id="PF01029">
    <property type="entry name" value="NusB"/>
    <property type="match status" value="1"/>
</dbReference>
<dbReference type="SUPFAM" id="SSF48013">
    <property type="entry name" value="NusB-like"/>
    <property type="match status" value="1"/>
</dbReference>
<accession>Q5M2R7</accession>